<protein>
    <recommendedName>
        <fullName>Phosphoprotein</fullName>
        <shortName>Protein P</shortName>
    </recommendedName>
    <alternativeName>
        <fullName>Protein M1</fullName>
    </alternativeName>
</protein>
<name>PHOSP_RABVS</name>
<comment type="function">
    <text evidence="1 3 6">Non catalytic polymerase cofactor and regulatory protein that plays a role in viral transcription and replication. Stabilizes the RNA polymerase L to the N-RNA template and binds the soluble protein N, preventing it from encapsidating non-genomic RNA. Also inhibits host IFN-alpha and IFN-beta signaling by binding and retaining phosphorylated STAT1 in the cytoplasm or by inhibiting the DNA binding of STAT1 in the nucleus. Might be involved, through interaction with host dynein, in intracellular microtubule-dependent virus transport of incoming virus from the synapse toward the cell body (By similarity). Inhibits interferon induction pathways by interacting with host TBK1 and preventing the formation of dynamic cytoplasmic condensates that have liquid properties and that are essential for interferon production (PubMed:36640307).</text>
</comment>
<comment type="subunit">
    <molecule>Phosphoprotein</molecule>
    <text evidence="4 5 6">Homotrimer when phosphorylated. This trimer is stabilized by binding to the L protein. Binds soluble protein N, and ribonucleocapsid. Interacts with host DYNLL1 and DYNLL2; this interaction may play a role in intracellular microtubule-dependent virus transport of incoming virus (PubMed:17438267). Interacts with host STAT1, STAT2 and PML (PubMed:16501077). Interacts with host TBK1 (PubMed:36640307).</text>
</comment>
<comment type="subunit">
    <molecule>Isoform P3</molecule>
    <text evidence="1">Binds host PML.</text>
</comment>
<comment type="subcellular location">
    <molecule>Phosphoprotein</molecule>
    <subcellularLocation>
        <location>Virion</location>
    </subcellularLocation>
    <subcellularLocation>
        <location evidence="6">Host cytoplasm</location>
    </subcellularLocation>
</comment>
<comment type="subcellular location">
    <molecule>Isoform P2</molecule>
    <subcellularLocation>
        <location evidence="1">Host cytoplasm</location>
    </subcellularLocation>
</comment>
<comment type="subcellular location">
    <molecule>Isoform P3</molecule>
    <subcellularLocation>
        <location evidence="1">Host nucleus</location>
    </subcellularLocation>
</comment>
<comment type="subcellular location">
    <molecule>Isoform P5</molecule>
    <subcellularLocation>
        <location evidence="1">Host nucleus</location>
    </subcellularLocation>
</comment>
<comment type="alternative products">
    <event type="alternative initiation"/>
    <isoform>
        <id>P16286-1</id>
        <name>P</name>
        <sequence type="displayed"/>
    </isoform>
    <isoform>
        <id>P16286-2</id>
        <name>P2</name>
        <sequence type="described" ref="VSP_026882"/>
    </isoform>
    <isoform>
        <id>P16286-3</id>
        <name>P3</name>
        <sequence type="described" ref="VSP_026881"/>
    </isoform>
    <isoform>
        <id>P16286-4</id>
        <name>P5</name>
        <sequence type="described" ref="VSP_026880"/>
    </isoform>
</comment>
<comment type="PTM">
    <text evidence="1">Phosphorylated by host PKC and by an unknown kinase.</text>
</comment>
<comment type="similarity">
    <text evidence="7">Belongs to the lyssavirus protein P family.</text>
</comment>
<organism>
    <name type="scientific">Rabies virus (strain SAD B19)</name>
    <name type="common">RABV</name>
    <dbReference type="NCBI Taxonomy" id="11300"/>
    <lineage>
        <taxon>Viruses</taxon>
        <taxon>Riboviria</taxon>
        <taxon>Orthornavirae</taxon>
        <taxon>Negarnaviricota</taxon>
        <taxon>Haploviricotina</taxon>
        <taxon>Monjiviricetes</taxon>
        <taxon>Mononegavirales</taxon>
        <taxon>Rhabdoviridae</taxon>
        <taxon>Alpharhabdovirinae</taxon>
        <taxon>Lyssavirus</taxon>
        <taxon>Lyssavirus rabies</taxon>
    </lineage>
</organism>
<sequence>MSKIFVNPSAIRAGLADLEMAEETVDLINRNIEDNQAHLQGEPIEVDNLPEDMGRLHLDDGKSPNHGEIAKVGEGKYREDFQMDEGEDPSFLFQSYLENVGVQIVRQMRSGERFLKIWSQTVEEIISYVAVNFPNPPGKSSEDKSTQTTGRELKKETTPTPSQRESQSSKARMAAQIASGPPALEWSATNEEDDLSVEAEIAHQIAESFSKKYKFPSRSSGILLYNFEQLKMNLDDIVKEAKNVPGVTRLAHDGSKLPLRCVLGWVALANSKKFQLLVESDKLSKIMQDDLNRYTSC</sequence>
<feature type="chain" id="PRO_0000222832" description="Phosphoprotein">
    <location>
        <begin position="1"/>
        <end position="297"/>
    </location>
</feature>
<feature type="region of interest" description="Disordered" evidence="2">
    <location>
        <begin position="132"/>
        <end position="175"/>
    </location>
</feature>
<feature type="region of interest" description="DYNLL1 and DYNLL2 binding" evidence="1">
    <location>
        <begin position="138"/>
        <end position="172"/>
    </location>
</feature>
<feature type="short sequence motif" description="Nuclear export signal" evidence="1">
    <location>
        <begin position="49"/>
        <end position="58"/>
    </location>
</feature>
<feature type="short sequence motif" description="Nuclear localization signal" evidence="1">
    <location>
        <begin position="211"/>
        <end position="214"/>
    </location>
</feature>
<feature type="compositionally biased region" description="Basic and acidic residues" evidence="2">
    <location>
        <begin position="140"/>
        <end position="157"/>
    </location>
</feature>
<feature type="compositionally biased region" description="Polar residues" evidence="2">
    <location>
        <begin position="158"/>
        <end position="170"/>
    </location>
</feature>
<feature type="modified residue" description="Phosphoserine; by host" evidence="1">
    <location>
        <position position="63"/>
    </location>
</feature>
<feature type="modified residue" description="Phosphoserine; by host PKC" evidence="1">
    <location>
        <position position="162"/>
    </location>
</feature>
<feature type="modified residue" description="Phosphoserine; by host PKC" evidence="1">
    <location>
        <position position="210"/>
    </location>
</feature>
<feature type="modified residue" description="Phosphoserine; by host PKC" evidence="1">
    <location>
        <position position="271"/>
    </location>
</feature>
<feature type="splice variant" id="VSP_026880" description="In isoform P5." evidence="7">
    <location>
        <begin position="1"/>
        <end position="82"/>
    </location>
</feature>
<feature type="splice variant" id="VSP_026881" description="In isoform P3." evidence="7">
    <location>
        <begin position="1"/>
        <end position="52"/>
    </location>
</feature>
<feature type="splice variant" id="VSP_026882" description="In isoform P2." evidence="7">
    <location>
        <begin position="1"/>
        <end position="19"/>
    </location>
</feature>
<feature type="sequence variant" description="In strain: Isolate SAD Bern, Isolate SAD Bern original var 1, Isolate SAD Bern original var 2, Isolate SAD Bern original var 3, Isolate SAD Bern original var 4 and Isolate SAD Bern original var 5.">
    <original>I</original>
    <variation>M</variation>
    <location>
        <position position="69"/>
    </location>
</feature>
<feature type="sequence variant" description="In strain: Isolate SAD Bern, Isolate SAD Bern original var 1, Isolate SAD Bern original var 2, Isolate SAD Bern original var 3, Isolate SAD Bern original var 4 and Isolate SAD Bern original var 5.">
    <original>Y</original>
    <variation>S</variation>
    <location>
        <position position="77"/>
    </location>
</feature>
<feature type="sequence variant" description="In strain: Isolate SAD Bern, Isolate SAD Bern original var 1, Isolate SAD Bern original var 2, Isolate SAD Bern original var 3, Isolate SAD Bern original var 4 and Isolate SAD Bern original var 5.">
    <original>E</original>
    <variation>G</variation>
    <location>
        <position position="156"/>
    </location>
</feature>
<feature type="sequence variant" description="In strain: Isolate SAD Bern, Isolate SAD Bern original var 1, Isolate SAD Bern original var 2, Isolate SAD Bern original var 3, Isolate SAD Bern original var 4 and Isolate SAD Bern original var 5.">
    <original>S</original>
    <variation>L</variation>
    <location>
        <position position="169"/>
    </location>
</feature>
<feature type="sequence variant" description="In strain: Isolate SAD Bern, Isolate SAD Bern original var 1, Isolate SAD Bern original var 2, Isolate SAD Bern original var 3, Isolate SAD Bern original var 4 and Isolate SAD Bern original var 5.">
    <original>I</original>
    <variation>T</variation>
    <location>
        <position position="177"/>
    </location>
</feature>
<feature type="mutagenesis site" description="Abolished inhibitory properties on host TBK1 and interferon induction." evidence="6">
    <original>S</original>
    <variation>P</variation>
    <location>
        <position position="179"/>
    </location>
</feature>
<feature type="strand" evidence="8">
    <location>
        <begin position="56"/>
        <end position="58"/>
    </location>
</feature>
<feature type="turn" evidence="8">
    <location>
        <begin position="67"/>
        <end position="69"/>
    </location>
</feature>
<gene>
    <name type="primary">P</name>
</gene>
<organismHost>
    <name type="scientific">Homo sapiens</name>
    <name type="common">Human</name>
    <dbReference type="NCBI Taxonomy" id="9606"/>
</organismHost>
<organismHost>
    <name type="scientific">Mammalia</name>
    <dbReference type="NCBI Taxonomy" id="40674"/>
</organismHost>
<dbReference type="EMBL" id="M31046">
    <property type="protein sequence ID" value="AAA47200.1"/>
    <property type="molecule type" value="Genomic_RNA"/>
</dbReference>
<dbReference type="EMBL" id="AF499686">
    <property type="protein sequence ID" value="AAT48624.1"/>
    <property type="molecule type" value="Genomic_RNA"/>
</dbReference>
<dbReference type="EMBL" id="EF206708">
    <property type="protein sequence ID" value="ABN11297.1"/>
    <property type="molecule type" value="Genomic_RNA"/>
</dbReference>
<dbReference type="EMBL" id="EF206709">
    <property type="protein sequence ID" value="ABN11302.1"/>
    <property type="molecule type" value="Genomic_RNA"/>
</dbReference>
<dbReference type="EMBL" id="EF206710">
    <property type="protein sequence ID" value="ABN11307.1"/>
    <property type="molecule type" value="Genomic_RNA"/>
</dbReference>
<dbReference type="EMBL" id="EF206711">
    <property type="protein sequence ID" value="ABN11312.1"/>
    <property type="molecule type" value="Genomic_RNA"/>
</dbReference>
<dbReference type="EMBL" id="EF206712">
    <property type="protein sequence ID" value="ABN11317.1"/>
    <property type="molecule type" value="Genomic_RNA"/>
</dbReference>
<dbReference type="EMBL" id="EF206713">
    <property type="protein sequence ID" value="ABN11322.1"/>
    <property type="molecule type" value="Genomic_RNA"/>
</dbReference>
<dbReference type="EMBL" id="EF206714">
    <property type="protein sequence ID" value="ABN11327.1"/>
    <property type="molecule type" value="Genomic_RNA"/>
</dbReference>
<dbReference type="EMBL" id="EF206715">
    <property type="protein sequence ID" value="ABN11332.1"/>
    <property type="molecule type" value="Genomic_RNA"/>
</dbReference>
<dbReference type="EMBL" id="EF206716">
    <property type="protein sequence ID" value="ABN11337.1"/>
    <property type="molecule type" value="Genomic_RNA"/>
</dbReference>
<dbReference type="EMBL" id="EF206719">
    <property type="protein sequence ID" value="ABN11352.1"/>
    <property type="molecule type" value="Genomic_RNA"/>
</dbReference>
<dbReference type="EMBL" id="EF206720">
    <property type="protein sequence ID" value="ABN11357.1"/>
    <property type="molecule type" value="Genomic_RNA"/>
</dbReference>
<dbReference type="PIR" id="B34746">
    <property type="entry name" value="MNVNSB"/>
</dbReference>
<dbReference type="PDB" id="6UEB">
    <property type="method" value="EM"/>
    <property type="resolution" value="3.30 A"/>
    <property type="chains" value="B=51-87"/>
</dbReference>
<dbReference type="PDBsum" id="6UEB"/>
<dbReference type="EMDB" id="EMD-20753"/>
<dbReference type="SMR" id="P16286"/>
<dbReference type="Proteomes" id="UP000006363">
    <property type="component" value="Genome"/>
</dbReference>
<dbReference type="Proteomes" id="UP000007308">
    <property type="component" value="Genome"/>
</dbReference>
<dbReference type="Proteomes" id="UP000100286">
    <property type="component" value="Genome"/>
</dbReference>
<dbReference type="Proteomes" id="UP000115894">
    <property type="component" value="Genome"/>
</dbReference>
<dbReference type="Proteomes" id="UP000123862">
    <property type="component" value="Genome"/>
</dbReference>
<dbReference type="Proteomes" id="UP000132522">
    <property type="component" value="Genome"/>
</dbReference>
<dbReference type="Proteomes" id="UP000133682">
    <property type="component" value="Genome"/>
</dbReference>
<dbReference type="Proteomes" id="UP000142143">
    <property type="component" value="Genome"/>
</dbReference>
<dbReference type="Proteomes" id="UP000151156">
    <property type="component" value="Genome"/>
</dbReference>
<dbReference type="Proteomes" id="UP000167748">
    <property type="component" value="Genome"/>
</dbReference>
<dbReference type="Proteomes" id="UP000172072">
    <property type="component" value="Genome"/>
</dbReference>
<dbReference type="Proteomes" id="UP000174835">
    <property type="component" value="Genome"/>
</dbReference>
<dbReference type="Proteomes" id="UP000175378">
    <property type="component" value="Genome"/>
</dbReference>
<dbReference type="GO" id="GO:0043657">
    <property type="term" value="C:host cell"/>
    <property type="evidence" value="ECO:0007669"/>
    <property type="project" value="GOC"/>
</dbReference>
<dbReference type="GO" id="GO:0030430">
    <property type="term" value="C:host cell cytoplasm"/>
    <property type="evidence" value="ECO:0007669"/>
    <property type="project" value="UniProtKB-SubCell"/>
</dbReference>
<dbReference type="GO" id="GO:0042025">
    <property type="term" value="C:host cell nucleus"/>
    <property type="evidence" value="ECO:0007669"/>
    <property type="project" value="UniProtKB-SubCell"/>
</dbReference>
<dbReference type="GO" id="GO:0044423">
    <property type="term" value="C:virion component"/>
    <property type="evidence" value="ECO:0007669"/>
    <property type="project" value="UniProtKB-KW"/>
</dbReference>
<dbReference type="GO" id="GO:0003968">
    <property type="term" value="F:RNA-directed RNA polymerase activity"/>
    <property type="evidence" value="ECO:0007669"/>
    <property type="project" value="InterPro"/>
</dbReference>
<dbReference type="GO" id="GO:0075521">
    <property type="term" value="P:microtubule-dependent intracellular transport of viral material towards nucleus"/>
    <property type="evidence" value="ECO:0007669"/>
    <property type="project" value="UniProtKB-KW"/>
</dbReference>
<dbReference type="GO" id="GO:0046718">
    <property type="term" value="P:symbiont entry into host cell"/>
    <property type="evidence" value="ECO:0007669"/>
    <property type="project" value="UniProtKB-KW"/>
</dbReference>
<dbReference type="GO" id="GO:0039723">
    <property type="term" value="P:symbiont-mediated suppression of host cytoplasmic pattern recognition receptor signaling pathway via inhibition of TBK1 activity"/>
    <property type="evidence" value="ECO:0007669"/>
    <property type="project" value="UniProtKB-KW"/>
</dbReference>
<dbReference type="GO" id="GO:0039563">
    <property type="term" value="P:symbiont-mediated suppression of host JAK-STAT cascade via inhibition of STAT1 activity"/>
    <property type="evidence" value="ECO:0007669"/>
    <property type="project" value="UniProtKB-KW"/>
</dbReference>
<dbReference type="GO" id="GO:0039564">
    <property type="term" value="P:symbiont-mediated suppression of host JAK-STAT cascade via inhibition of STAT2 activity"/>
    <property type="evidence" value="ECO:0007669"/>
    <property type="project" value="UniProtKB-KW"/>
</dbReference>
<dbReference type="GO" id="GO:0039722">
    <property type="term" value="P:symbiont-mediated suppression of host toll-like receptor signaling pathway"/>
    <property type="evidence" value="ECO:0007669"/>
    <property type="project" value="UniProtKB-KW"/>
</dbReference>
<dbReference type="GO" id="GO:0039653">
    <property type="term" value="P:symbiont-mediated suppression of host transcription"/>
    <property type="evidence" value="ECO:0000315"/>
    <property type="project" value="CACAO"/>
</dbReference>
<dbReference type="GO" id="GO:0039502">
    <property type="term" value="P:symbiont-mediated suppression of host type I interferon-mediated signaling pathway"/>
    <property type="evidence" value="ECO:0007669"/>
    <property type="project" value="UniProtKB-KW"/>
</dbReference>
<dbReference type="GO" id="GO:0019083">
    <property type="term" value="P:viral transcription"/>
    <property type="evidence" value="ECO:0007669"/>
    <property type="project" value="InterPro"/>
</dbReference>
<dbReference type="CDD" id="cd21032">
    <property type="entry name" value="RABV_P-protein-C_like"/>
    <property type="match status" value="1"/>
</dbReference>
<dbReference type="FunFam" id="1.20.120.820:FF:000001">
    <property type="entry name" value="Phosphoprotein"/>
    <property type="match status" value="1"/>
</dbReference>
<dbReference type="Gene3D" id="6.10.140.1560">
    <property type="match status" value="1"/>
</dbReference>
<dbReference type="Gene3D" id="1.20.120.820">
    <property type="entry name" value="Phosphoprotein, C-terminal domain"/>
    <property type="match status" value="1"/>
</dbReference>
<dbReference type="InterPro" id="IPR004259">
    <property type="entry name" value="PP_M1-like"/>
</dbReference>
<dbReference type="InterPro" id="IPR037199">
    <property type="entry name" value="PP_M1_C"/>
</dbReference>
<dbReference type="InterPro" id="IPR049506">
    <property type="entry name" value="RABV_P-like_C"/>
</dbReference>
<dbReference type="Pfam" id="PF03012">
    <property type="entry name" value="PP_M1"/>
    <property type="match status" value="1"/>
</dbReference>
<dbReference type="SUPFAM" id="SSF118173">
    <property type="entry name" value="Phosphoprotein M1, C-terminal domain"/>
    <property type="match status" value="1"/>
</dbReference>
<keyword id="KW-0002">3D-structure</keyword>
<keyword id="KW-0024">Alternative initiation</keyword>
<keyword id="KW-0143">Chaperone</keyword>
<keyword id="KW-1176">Cytoplasmic inwards viral transport</keyword>
<keyword id="KW-1035">Host cytoplasm</keyword>
<keyword id="KW-1048">Host nucleus</keyword>
<keyword id="KW-0945">Host-virus interaction</keyword>
<keyword id="KW-1090">Inhibition of host innate immune response by virus</keyword>
<keyword id="KW-1114">Inhibition of host interferon signaling pathway by virus</keyword>
<keyword id="KW-1105">Inhibition of host STAT1 by virus</keyword>
<keyword id="KW-1106">Inhibition of host STAT2 by virus</keyword>
<keyword id="KW-1223">Inhibition of host TBK1 by virus</keyword>
<keyword id="KW-1225">Inhibition of host TLR pathway by virus</keyword>
<keyword id="KW-0922">Interferon antiviral system evasion</keyword>
<keyword id="KW-1177">Microtubular inwards viral transport</keyword>
<keyword id="KW-0597">Phosphoprotein</keyword>
<keyword id="KW-0899">Viral immunoevasion</keyword>
<keyword id="KW-0693">Viral RNA replication</keyword>
<keyword id="KW-0946">Virion</keyword>
<keyword id="KW-1160">Virus entry into host cell</keyword>
<reference key="1">
    <citation type="journal article" date="1990" name="Virology">
        <title>Molecular cloning and complete nucleotide sequence of the attenuated rabies virus SAD B19.</title>
        <authorList>
            <person name="Conzelmann K.-K."/>
            <person name="Cox J.H."/>
            <person name="Schneider L.G."/>
            <person name="Thiel H.-J."/>
        </authorList>
    </citation>
    <scope>NUCLEOTIDE SEQUENCE [GENOMIC RNA]</scope>
</reference>
<reference key="2">
    <citation type="submission" date="2004-04" db="EMBL/GenBank/DDBJ databases">
        <title>Analysis of the whole sequence of rabies virus vaccine strain SRV9.</title>
        <authorList>
            <person name="Wang T."/>
            <person name="Zhang S."/>
            <person name="Hu R."/>
        </authorList>
    </citation>
    <scope>NUCLEOTIDE SEQUENCE [GENOMIC RNA]</scope>
    <source>
        <strain>SRV9</strain>
    </source>
</reference>
<reference key="3">
    <citation type="submission" date="2007-01" db="EMBL/GenBank/DDBJ databases">
        <title>Complete nucleotide sequencing of SAD derivatives of attenuated rabies virus vaccine strains.</title>
        <authorList>
            <person name="Geue L."/>
            <person name="Schares S."/>
            <person name="Schnick C."/>
            <person name="Kliemt J."/>
            <person name="Beckert A."/>
            <person name="Hoffmann B."/>
            <person name="Freuling C."/>
            <person name="Marston D."/>
            <person name="McElhinney L."/>
            <person name="Fooks A."/>
            <person name="Zanoni R."/>
            <person name="Peterhans E."/>
            <person name="Cox J."/>
            <person name="Mueller T."/>
        </authorList>
    </citation>
    <scope>NUCLEOTIDE SEQUENCE [GENOMIC RNA]</scope>
    <source>
        <strain>Isolate SAD B19</strain>
        <strain>Isolate SAD Bern</strain>
        <strain>Isolate SAD Bern original var 1</strain>
        <strain>Isolate SAD Bern original var 2</strain>
        <strain>Isolate SAD Bern original var 3</strain>
        <strain>Isolate SAD Bern original var 4</strain>
        <strain>Isolate SAD Bern original var 5</strain>
        <strain>Isolate SAD P5/88</strain>
        <strain>Isolate SAD VA1</strain>
        <strain>Isolate SAG 2</strain>
    </source>
</reference>
<reference key="4">
    <citation type="journal article" date="2004" name="J. Gen. Virol.">
        <title>Interactions amongst rabies virus nucleoprotein, phosphoprotein and genomic RNA in virus-infected and transfected cells.</title>
        <authorList>
            <person name="Liu P."/>
            <person name="Yang J."/>
            <person name="Wu X."/>
            <person name="Fu Z.F."/>
        </authorList>
    </citation>
    <scope>FUNCTION</scope>
</reference>
<reference key="5">
    <citation type="journal article" date="2006" name="J. Virol.">
        <title>Inhibition of interferon signaling by rabies virus phosphoprotein P: activation-dependent binding of STAT1 and STAT2.</title>
        <authorList>
            <person name="Brzozka K."/>
            <person name="Finke S."/>
            <person name="Conzelmann K.K."/>
        </authorList>
    </citation>
    <scope>INTERACTION WITH HOST STAT1 AND STAT2</scope>
</reference>
<reference key="6">
    <citation type="journal article" date="2007" name="Proc. Natl. Acad. Sci. U.S.A.">
        <title>The dynein light chain 8 binding motif of rabies virus phosphoprotein promotes efficient viral transcription.</title>
        <authorList>
            <person name="Tan G.S."/>
            <person name="Preuss M.A."/>
            <person name="Williams J.C."/>
            <person name="Schnell M.J."/>
        </authorList>
    </citation>
    <scope>INTERACTION WITH DYNLL1</scope>
</reference>
<reference key="7">
    <citation type="journal article" date="2023" name="Cell Rep.">
        <title>Rabies virus P protein binds to TBK1 and interferes with the formation of innate immunity-related liquid condensates.</title>
        <authorList>
            <person name="Scrima N."/>
            <person name="Le Bars R."/>
            <person name="Nevers Q."/>
            <person name="Glon D."/>
            <person name="Chevreux G."/>
            <person name="Civas A."/>
            <person name="Blondel D."/>
            <person name="Lagaudriere-Gesbert C."/>
            <person name="Gaudin Y."/>
        </authorList>
    </citation>
    <scope>INTERACTION WITH HOST TBK1</scope>
    <scope>FUNCTION</scope>
    <scope>MUTAGENESIS OF SER-179</scope>
</reference>
<proteinExistence type="evidence at protein level"/>
<accession>P16286</accession>
<accession>A3F5M1</accession>
<accession>Q6HA97</accession>
<evidence type="ECO:0000250" key="1"/>
<evidence type="ECO:0000256" key="2">
    <source>
        <dbReference type="SAM" id="MobiDB-lite"/>
    </source>
</evidence>
<evidence type="ECO:0000269" key="3">
    <source>
    </source>
</evidence>
<evidence type="ECO:0000269" key="4">
    <source>
    </source>
</evidence>
<evidence type="ECO:0000269" key="5">
    <source>
    </source>
</evidence>
<evidence type="ECO:0000269" key="6">
    <source>
    </source>
</evidence>
<evidence type="ECO:0000305" key="7"/>
<evidence type="ECO:0007829" key="8">
    <source>
        <dbReference type="PDB" id="6UEB"/>
    </source>
</evidence>